<feature type="chain" id="PRO_0000272842" description="Large ribosomal subunit protein uL23">
    <location>
        <begin position="1"/>
        <end position="100"/>
    </location>
</feature>
<accession>Q0HNT5</accession>
<protein>
    <recommendedName>
        <fullName evidence="1">Large ribosomal subunit protein uL23</fullName>
    </recommendedName>
    <alternativeName>
        <fullName evidence="2">50S ribosomal protein L23</fullName>
    </alternativeName>
</protein>
<sequence length="100" mass="10935">MIREERLLKVILAPHISEKSTVNAEKHNTVVFRVAIDATKAEIKAAVAKLFEVEVESVRTLVSKGKTKRTGGRVGRRSDWKKAYVTLAAGADIDFVGGAE</sequence>
<comment type="function">
    <text evidence="1">One of the early assembly proteins it binds 23S rRNA. One of the proteins that surrounds the polypeptide exit tunnel on the outside of the ribosome. Forms the main docking site for trigger factor binding to the ribosome.</text>
</comment>
<comment type="subunit">
    <text evidence="1">Part of the 50S ribosomal subunit. Contacts protein L29, and trigger factor when it is bound to the ribosome.</text>
</comment>
<comment type="similarity">
    <text evidence="1">Belongs to the universal ribosomal protein uL23 family.</text>
</comment>
<comment type="sequence caution" evidence="2">
    <conflict type="erroneous initiation">
        <sequence resource="EMBL-CDS" id="ABI37282"/>
    </conflict>
</comment>
<keyword id="KW-0687">Ribonucleoprotein</keyword>
<keyword id="KW-0689">Ribosomal protein</keyword>
<keyword id="KW-0694">RNA-binding</keyword>
<keyword id="KW-0699">rRNA-binding</keyword>
<reference key="1">
    <citation type="submission" date="2006-08" db="EMBL/GenBank/DDBJ databases">
        <title>Complete sequence of Shewanella sp. MR-4.</title>
        <authorList>
            <consortium name="US DOE Joint Genome Institute"/>
            <person name="Copeland A."/>
            <person name="Lucas S."/>
            <person name="Lapidus A."/>
            <person name="Barry K."/>
            <person name="Detter J.C."/>
            <person name="Glavina del Rio T."/>
            <person name="Hammon N."/>
            <person name="Israni S."/>
            <person name="Dalin E."/>
            <person name="Tice H."/>
            <person name="Pitluck S."/>
            <person name="Kiss H."/>
            <person name="Brettin T."/>
            <person name="Bruce D."/>
            <person name="Han C."/>
            <person name="Tapia R."/>
            <person name="Gilna P."/>
            <person name="Schmutz J."/>
            <person name="Larimer F."/>
            <person name="Land M."/>
            <person name="Hauser L."/>
            <person name="Kyrpides N."/>
            <person name="Mikhailova N."/>
            <person name="Nealson K."/>
            <person name="Konstantinidis K."/>
            <person name="Klappenbach J."/>
            <person name="Tiedje J."/>
            <person name="Richardson P."/>
        </authorList>
    </citation>
    <scope>NUCLEOTIDE SEQUENCE [LARGE SCALE GENOMIC DNA]</scope>
    <source>
        <strain>MR-4</strain>
    </source>
</reference>
<organism>
    <name type="scientific">Shewanella sp. (strain MR-4)</name>
    <dbReference type="NCBI Taxonomy" id="60480"/>
    <lineage>
        <taxon>Bacteria</taxon>
        <taxon>Pseudomonadati</taxon>
        <taxon>Pseudomonadota</taxon>
        <taxon>Gammaproteobacteria</taxon>
        <taxon>Alteromonadales</taxon>
        <taxon>Shewanellaceae</taxon>
        <taxon>Shewanella</taxon>
    </lineage>
</organism>
<name>RL23_SHESM</name>
<proteinExistence type="inferred from homology"/>
<gene>
    <name evidence="1" type="primary">rplW</name>
    <name type="ordered locus">Shewmr4_0201</name>
</gene>
<dbReference type="EMBL" id="CP000446">
    <property type="protein sequence ID" value="ABI37282.1"/>
    <property type="status" value="ALT_INIT"/>
    <property type="molecule type" value="Genomic_DNA"/>
</dbReference>
<dbReference type="RefSeq" id="WP_041408946.1">
    <property type="nucleotide sequence ID" value="NC_008321.1"/>
</dbReference>
<dbReference type="SMR" id="Q0HNT5"/>
<dbReference type="KEGG" id="she:Shewmr4_0201"/>
<dbReference type="HOGENOM" id="CLU_037562_3_1_6"/>
<dbReference type="GO" id="GO:1990904">
    <property type="term" value="C:ribonucleoprotein complex"/>
    <property type="evidence" value="ECO:0007669"/>
    <property type="project" value="UniProtKB-KW"/>
</dbReference>
<dbReference type="GO" id="GO:0005840">
    <property type="term" value="C:ribosome"/>
    <property type="evidence" value="ECO:0007669"/>
    <property type="project" value="UniProtKB-KW"/>
</dbReference>
<dbReference type="GO" id="GO:0019843">
    <property type="term" value="F:rRNA binding"/>
    <property type="evidence" value="ECO:0007669"/>
    <property type="project" value="UniProtKB-UniRule"/>
</dbReference>
<dbReference type="GO" id="GO:0003735">
    <property type="term" value="F:structural constituent of ribosome"/>
    <property type="evidence" value="ECO:0007669"/>
    <property type="project" value="InterPro"/>
</dbReference>
<dbReference type="GO" id="GO:0006412">
    <property type="term" value="P:translation"/>
    <property type="evidence" value="ECO:0007669"/>
    <property type="project" value="UniProtKB-UniRule"/>
</dbReference>
<dbReference type="FunFam" id="3.30.70.330:FF:000001">
    <property type="entry name" value="50S ribosomal protein L23"/>
    <property type="match status" value="1"/>
</dbReference>
<dbReference type="Gene3D" id="3.30.70.330">
    <property type="match status" value="1"/>
</dbReference>
<dbReference type="HAMAP" id="MF_01369_B">
    <property type="entry name" value="Ribosomal_uL23_B"/>
    <property type="match status" value="1"/>
</dbReference>
<dbReference type="InterPro" id="IPR012677">
    <property type="entry name" value="Nucleotide-bd_a/b_plait_sf"/>
</dbReference>
<dbReference type="InterPro" id="IPR013025">
    <property type="entry name" value="Ribosomal_uL23-like"/>
</dbReference>
<dbReference type="InterPro" id="IPR012678">
    <property type="entry name" value="Ribosomal_uL23/eL15/eS24_sf"/>
</dbReference>
<dbReference type="InterPro" id="IPR001014">
    <property type="entry name" value="Ribosomal_uL23_CS"/>
</dbReference>
<dbReference type="NCBIfam" id="NF004358">
    <property type="entry name" value="PRK05738.1-1"/>
    <property type="match status" value="1"/>
</dbReference>
<dbReference type="NCBIfam" id="NF004359">
    <property type="entry name" value="PRK05738.1-3"/>
    <property type="match status" value="1"/>
</dbReference>
<dbReference type="NCBIfam" id="NF004363">
    <property type="entry name" value="PRK05738.2-4"/>
    <property type="match status" value="1"/>
</dbReference>
<dbReference type="PANTHER" id="PTHR11620">
    <property type="entry name" value="60S RIBOSOMAL PROTEIN L23A"/>
    <property type="match status" value="1"/>
</dbReference>
<dbReference type="Pfam" id="PF00276">
    <property type="entry name" value="Ribosomal_L23"/>
    <property type="match status" value="1"/>
</dbReference>
<dbReference type="SUPFAM" id="SSF54189">
    <property type="entry name" value="Ribosomal proteins S24e, L23 and L15e"/>
    <property type="match status" value="1"/>
</dbReference>
<dbReference type="PROSITE" id="PS00050">
    <property type="entry name" value="RIBOSOMAL_L23"/>
    <property type="match status" value="1"/>
</dbReference>
<evidence type="ECO:0000255" key="1">
    <source>
        <dbReference type="HAMAP-Rule" id="MF_01369"/>
    </source>
</evidence>
<evidence type="ECO:0000305" key="2"/>